<keyword id="KW-1283">Bacterial microcompartment</keyword>
<keyword id="KW-0903">Direct protein sequencing</keyword>
<keyword id="KW-1185">Reference proteome</keyword>
<feature type="chain" id="PRO_0000454266" description="Bacterial microcompartment assembly protein PduM">
    <location>
        <begin position="1"/>
        <end position="163"/>
    </location>
</feature>
<protein>
    <recommendedName>
        <fullName evidence="6">Bacterial microcompartment assembly protein PduM</fullName>
    </recommendedName>
    <alternativeName>
        <fullName evidence="5">Propanediol utilization protein PduM</fullName>
    </alternativeName>
</protein>
<sequence length="163" mass="17914">MNGETLQRIVEEIVSRLHRRAQSTATLSVTQLRDADCPALFCQHASLRILLIDLPLLGQLADAETGDAAARKIHDALAFGIRVQLSLHSQLLPVIPVKKLARLPLVFTDEHGLPLVLHAGSVLSYRDVALLSRGRVVVHRKCIVTAMARDAANARNIQLIKQE</sequence>
<evidence type="ECO:0000250" key="1">
    <source>
        <dbReference type="UniProtKB" id="B1VB72"/>
    </source>
</evidence>
<evidence type="ECO:0000269" key="2">
    <source>
    </source>
</evidence>
<evidence type="ECO:0000269" key="3">
    <source>
    </source>
</evidence>
<evidence type="ECO:0000269" key="4">
    <source>
    </source>
</evidence>
<evidence type="ECO:0000303" key="5">
    <source>
    </source>
</evidence>
<evidence type="ECO:0000303" key="6">
    <source>
    </source>
</evidence>
<evidence type="ECO:0000305" key="7"/>
<evidence type="ECO:0000305" key="8">
    <source>
    </source>
</evidence>
<evidence type="ECO:0000305" key="9">
    <source>
    </source>
</evidence>
<reference key="1">
    <citation type="journal article" date="1999" name="J. Bacteriol.">
        <title>The propanediol utilization (pdu) operon of Salmonella enterica serovar typhimurium LT2 includes genes necessary for formation of polyhedral organelles involved in coenzyme B(12)-dependent 1, 2-propanediol degradation.</title>
        <authorList>
            <person name="Bobik T.A."/>
            <person name="Havemann G.D."/>
            <person name="Busch R.J."/>
            <person name="Williams D.S."/>
            <person name="Aldrich H.C."/>
        </authorList>
    </citation>
    <scope>NUCLEOTIDE SEQUENCE [GENOMIC DNA]</scope>
    <scope>PATHWAY</scope>
    <scope>INDUCTION</scope>
    <source>
        <strain>LT2</strain>
    </source>
</reference>
<reference key="2">
    <citation type="journal article" date="2001" name="Nature">
        <title>Complete genome sequence of Salmonella enterica serovar Typhimurium LT2.</title>
        <authorList>
            <person name="McClelland M."/>
            <person name="Sanderson K.E."/>
            <person name="Spieth J."/>
            <person name="Clifton S.W."/>
            <person name="Latreille P."/>
            <person name="Courtney L."/>
            <person name="Porwollik S."/>
            <person name="Ali J."/>
            <person name="Dante M."/>
            <person name="Du F."/>
            <person name="Hou S."/>
            <person name="Layman D."/>
            <person name="Leonard S."/>
            <person name="Nguyen C."/>
            <person name="Scott K."/>
            <person name="Holmes A."/>
            <person name="Grewal N."/>
            <person name="Mulvaney E."/>
            <person name="Ryan E."/>
            <person name="Sun H."/>
            <person name="Florea L."/>
            <person name="Miller W."/>
            <person name="Stoneking T."/>
            <person name="Nhan M."/>
            <person name="Waterston R."/>
            <person name="Wilson R.K."/>
        </authorList>
    </citation>
    <scope>NUCLEOTIDE SEQUENCE [LARGE SCALE GENOMIC DNA]</scope>
    <source>
        <strain>LT2 / SGSC1412 / ATCC 700720</strain>
    </source>
</reference>
<reference key="3">
    <citation type="journal article" date="2012" name="J. Bacteriol.">
        <title>The PduM protein is a structural component of the microcompartments involved in coenzyme B(12)-dependent 1,2-propanediol degradation by Salmonella enterica.</title>
        <authorList>
            <person name="Sinha S."/>
            <person name="Cheng S."/>
            <person name="Fan C."/>
            <person name="Bobik T.A."/>
        </authorList>
    </citation>
    <scope>PROTEIN SEQUENCE OF 9-16; 20-48 AND 72-82</scope>
    <scope>FUNCTION</scope>
    <scope>SUBCELLULAR LOCATION</scope>
    <scope>DISRUPTION PHENOTYPE</scope>
    <source>
        <strain>LT2</strain>
    </source>
</reference>
<reference key="4">
    <citation type="journal article" date="2003" name="J. Bacteriol.">
        <title>Protein content of polyhedral organelles involved in coenzyme B12-dependent degradation of 1,2-propanediol in Salmonella enterica serovar Typhimurium LT2.</title>
        <authorList>
            <person name="Havemann G.D."/>
            <person name="Bobik T.A."/>
        </authorList>
    </citation>
    <scope>BACTERIAL MICROCOMPARTMENT ABUNDANCE</scope>
    <source>
        <strain>LT2</strain>
    </source>
</reference>
<reference key="5">
    <citation type="journal article" date="2017" name="PLoS Comput. Biol.">
        <title>A systems-level model reveals that 1,2-Propanediol utilization microcompartments enhance pathway flux through intermediate sequestration.</title>
        <authorList>
            <person name="Jakobson C.M."/>
            <person name="Tullman-Ercek D."/>
            <person name="Slininger M.F."/>
            <person name="Mangan N.M."/>
        </authorList>
    </citation>
    <scope>SYSTEM-MODELING</scope>
    <scope>FUNCTION</scope>
    <source>
        <strain>LT2</strain>
    </source>
</reference>
<proteinExistence type="evidence at protein level"/>
<accession>Q9XDN4</accession>
<accession>Q7BV78</accession>
<name>PDUM_SALTY</name>
<dbReference type="EMBL" id="AF026270">
    <property type="protein sequence ID" value="AAD39012.1"/>
    <property type="molecule type" value="Genomic_DNA"/>
</dbReference>
<dbReference type="EMBL" id="AE006468">
    <property type="protein sequence ID" value="AAL20952.1"/>
    <property type="molecule type" value="Genomic_DNA"/>
</dbReference>
<dbReference type="RefSeq" id="NP_460993.1">
    <property type="nucleotide sequence ID" value="NC_003197.2"/>
</dbReference>
<dbReference type="RefSeq" id="WP_001012956.1">
    <property type="nucleotide sequence ID" value="NC_003197.2"/>
</dbReference>
<dbReference type="STRING" id="99287.STM2048"/>
<dbReference type="PaxDb" id="99287-STM2048"/>
<dbReference type="GeneID" id="1253569"/>
<dbReference type="KEGG" id="stm:STM2048"/>
<dbReference type="PATRIC" id="fig|99287.12.peg.2170"/>
<dbReference type="HOGENOM" id="CLU_137852_0_0_6"/>
<dbReference type="OMA" id="MLMQRIV"/>
<dbReference type="BioCyc" id="SENT99287:STM2048-MONOMER"/>
<dbReference type="UniPathway" id="UPA00621"/>
<dbReference type="Proteomes" id="UP000001014">
    <property type="component" value="Chromosome"/>
</dbReference>
<dbReference type="GO" id="GO:0031472">
    <property type="term" value="C:propanediol degradation polyhedral organelle"/>
    <property type="evidence" value="ECO:0000314"/>
    <property type="project" value="UniProtKB"/>
</dbReference>
<dbReference type="GO" id="GO:0005198">
    <property type="term" value="F:structural molecule activity"/>
    <property type="evidence" value="ECO:0007669"/>
    <property type="project" value="InterPro"/>
</dbReference>
<dbReference type="GO" id="GO:1902117">
    <property type="term" value="P:positive regulation of organelle assembly"/>
    <property type="evidence" value="ECO:0000315"/>
    <property type="project" value="UniProtKB"/>
</dbReference>
<dbReference type="GO" id="GO:0051144">
    <property type="term" value="P:propanediol catabolic process"/>
    <property type="evidence" value="ECO:0007669"/>
    <property type="project" value="UniProtKB-UniPathway"/>
</dbReference>
<dbReference type="InterPro" id="IPR030992">
    <property type="entry name" value="PduM"/>
</dbReference>
<dbReference type="NCBIfam" id="TIGR04493">
    <property type="entry name" value="microcomp_PduM"/>
    <property type="match status" value="1"/>
</dbReference>
<dbReference type="NCBIfam" id="NF011957">
    <property type="entry name" value="PRK15428.1"/>
    <property type="match status" value="1"/>
</dbReference>
<dbReference type="Pfam" id="PF15953">
    <property type="entry name" value="PDU_like"/>
    <property type="match status" value="1"/>
</dbReference>
<gene>
    <name evidence="5" type="primary">pduM</name>
    <name type="ordered locus">STM2048</name>
</gene>
<comment type="function">
    <text evidence="4">Plays an essential role in assembly and/or stability of the bacterial microcompartment (BMC) dedicated to 1,2-propanediol (1,2-PD) degradation. Overexpression impairs BMC formation.</text>
</comment>
<comment type="function">
    <text evidence="9">The 1,2-PD-specific bacterial microcompartment (BMC) concentrates low levels of 1,2-PD catabolic enzymes, concentrates volatile reaction intermediates thus enhancing pathway flux and keeps the level of toxic, mutagenic propionaldehyde low.</text>
</comment>
<comment type="pathway">
    <text evidence="8">Polyol metabolism; 1,2-propanediol degradation.</text>
</comment>
<comment type="subunit">
    <text evidence="1">Interacts with shell protein PduK.</text>
</comment>
<comment type="subcellular location">
    <subcellularLocation>
        <location evidence="4">Bacterial microcompartment</location>
    </subcellularLocation>
</comment>
<comment type="induction">
    <text evidence="2">BMC production is induced by growth on 1,2-PD vitamin B12 medium.</text>
</comment>
<comment type="disruption phenotype">
    <text evidence="4">Impaired for BMC assembly, with a disrupted, unstable BMC shell.</text>
</comment>
<comment type="miscellaneous">
    <text evidence="2 3">Bacterial microcompartments (BMC) 100-200 nm in cross section are formed during aerobic growth on minimal 1,2-PD-B12 or anaerobic growth on 1,2-PD-tetrathionate medium, but not during aerobic growth on glucose, anerobic growth on glucose or pyruvate-tetrathionate (PubMed:10498708). BMCs can constitute up to 10% of total cell protein (PubMed:12923081).</text>
</comment>
<comment type="similarity">
    <text evidence="7">Belongs to the PduM family.</text>
</comment>
<organism>
    <name type="scientific">Salmonella typhimurium (strain LT2 / SGSC1412 / ATCC 700720)</name>
    <dbReference type="NCBI Taxonomy" id="99287"/>
    <lineage>
        <taxon>Bacteria</taxon>
        <taxon>Pseudomonadati</taxon>
        <taxon>Pseudomonadota</taxon>
        <taxon>Gammaproteobacteria</taxon>
        <taxon>Enterobacterales</taxon>
        <taxon>Enterobacteriaceae</taxon>
        <taxon>Salmonella</taxon>
    </lineage>
</organism>